<proteinExistence type="inferred from homology"/>
<comment type="function">
    <text evidence="1">Catalyzes the reversible conversion of 3-phosphohydroxypyruvate to phosphoserine and of 3-hydroxy-2-oxo-4-phosphonooxybutanoate to phosphohydroxythreonine.</text>
</comment>
<comment type="catalytic activity">
    <reaction evidence="1">
        <text>O-phospho-L-serine + 2-oxoglutarate = 3-phosphooxypyruvate + L-glutamate</text>
        <dbReference type="Rhea" id="RHEA:14329"/>
        <dbReference type="ChEBI" id="CHEBI:16810"/>
        <dbReference type="ChEBI" id="CHEBI:18110"/>
        <dbReference type="ChEBI" id="CHEBI:29985"/>
        <dbReference type="ChEBI" id="CHEBI:57524"/>
        <dbReference type="EC" id="2.6.1.52"/>
    </reaction>
</comment>
<comment type="catalytic activity">
    <reaction evidence="1">
        <text>4-(phosphooxy)-L-threonine + 2-oxoglutarate = (R)-3-hydroxy-2-oxo-4-phosphooxybutanoate + L-glutamate</text>
        <dbReference type="Rhea" id="RHEA:16573"/>
        <dbReference type="ChEBI" id="CHEBI:16810"/>
        <dbReference type="ChEBI" id="CHEBI:29985"/>
        <dbReference type="ChEBI" id="CHEBI:58452"/>
        <dbReference type="ChEBI" id="CHEBI:58538"/>
        <dbReference type="EC" id="2.6.1.52"/>
    </reaction>
</comment>
<comment type="cofactor">
    <cofactor evidence="1">
        <name>pyridoxal 5'-phosphate</name>
        <dbReference type="ChEBI" id="CHEBI:597326"/>
    </cofactor>
    <text evidence="1">Binds 1 pyridoxal phosphate per subunit.</text>
</comment>
<comment type="pathway">
    <text evidence="1">Amino-acid biosynthesis; L-serine biosynthesis; L-serine from 3-phospho-D-glycerate: step 2/3.</text>
</comment>
<comment type="subunit">
    <text evidence="1">Homodimer.</text>
</comment>
<comment type="subcellular location">
    <subcellularLocation>
        <location evidence="1">Cytoplasm</location>
    </subcellularLocation>
</comment>
<comment type="similarity">
    <text evidence="1">Belongs to the class-V pyridoxal-phosphate-dependent aminotransferase family. SerC subfamily.</text>
</comment>
<feature type="chain" id="PRO_0000150172" description="Phosphoserine aminotransferase">
    <location>
        <begin position="1"/>
        <end position="360"/>
    </location>
</feature>
<feature type="binding site" evidence="1">
    <location>
        <position position="42"/>
    </location>
    <ligand>
        <name>L-glutamate</name>
        <dbReference type="ChEBI" id="CHEBI:29985"/>
    </ligand>
</feature>
<feature type="binding site" evidence="1">
    <location>
        <begin position="76"/>
        <end position="77"/>
    </location>
    <ligand>
        <name>pyridoxal 5'-phosphate</name>
        <dbReference type="ChEBI" id="CHEBI:597326"/>
    </ligand>
</feature>
<feature type="binding site" evidence="1">
    <location>
        <position position="102"/>
    </location>
    <ligand>
        <name>pyridoxal 5'-phosphate</name>
        <dbReference type="ChEBI" id="CHEBI:597326"/>
    </ligand>
</feature>
<feature type="binding site" evidence="1">
    <location>
        <position position="152"/>
    </location>
    <ligand>
        <name>pyridoxal 5'-phosphate</name>
        <dbReference type="ChEBI" id="CHEBI:597326"/>
    </ligand>
</feature>
<feature type="binding site" evidence="1">
    <location>
        <position position="171"/>
    </location>
    <ligand>
        <name>pyridoxal 5'-phosphate</name>
        <dbReference type="ChEBI" id="CHEBI:597326"/>
    </ligand>
</feature>
<feature type="binding site" evidence="1">
    <location>
        <position position="194"/>
    </location>
    <ligand>
        <name>pyridoxal 5'-phosphate</name>
        <dbReference type="ChEBI" id="CHEBI:597326"/>
    </ligand>
</feature>
<feature type="binding site" evidence="1">
    <location>
        <begin position="236"/>
        <end position="237"/>
    </location>
    <ligand>
        <name>pyridoxal 5'-phosphate</name>
        <dbReference type="ChEBI" id="CHEBI:597326"/>
    </ligand>
</feature>
<feature type="modified residue" description="N6-(pyridoxal phosphate)lysine" evidence="1">
    <location>
        <position position="195"/>
    </location>
</feature>
<evidence type="ECO:0000255" key="1">
    <source>
        <dbReference type="HAMAP-Rule" id="MF_00160"/>
    </source>
</evidence>
<protein>
    <recommendedName>
        <fullName evidence="1">Phosphoserine aminotransferase</fullName>
        <ecNumber evidence="1">2.6.1.52</ecNumber>
    </recommendedName>
    <alternativeName>
        <fullName evidence="1">Phosphohydroxythreonine aminotransferase</fullName>
        <shortName evidence="1">PSAT</shortName>
    </alternativeName>
</protein>
<name>SERC_GEOKA</name>
<gene>
    <name evidence="1" type="primary">serC</name>
    <name type="ordered locus">GK0649</name>
</gene>
<keyword id="KW-0028">Amino-acid biosynthesis</keyword>
<keyword id="KW-0032">Aminotransferase</keyword>
<keyword id="KW-0963">Cytoplasm</keyword>
<keyword id="KW-0663">Pyridoxal phosphate</keyword>
<keyword id="KW-1185">Reference proteome</keyword>
<keyword id="KW-0718">Serine biosynthesis</keyword>
<keyword id="KW-0808">Transferase</keyword>
<accession>Q5L296</accession>
<reference key="1">
    <citation type="journal article" date="2004" name="Nucleic Acids Res.">
        <title>Thermoadaptation trait revealed by the genome sequence of thermophilic Geobacillus kaustophilus.</title>
        <authorList>
            <person name="Takami H."/>
            <person name="Takaki Y."/>
            <person name="Chee G.-J."/>
            <person name="Nishi S."/>
            <person name="Shimamura S."/>
            <person name="Suzuki H."/>
            <person name="Matsui S."/>
            <person name="Uchiyama I."/>
        </authorList>
    </citation>
    <scope>NUCLEOTIDE SEQUENCE [LARGE SCALE GENOMIC DNA]</scope>
    <source>
        <strain>HTA426</strain>
    </source>
</reference>
<organism>
    <name type="scientific">Geobacillus kaustophilus (strain HTA426)</name>
    <dbReference type="NCBI Taxonomy" id="235909"/>
    <lineage>
        <taxon>Bacteria</taxon>
        <taxon>Bacillati</taxon>
        <taxon>Bacillota</taxon>
        <taxon>Bacilli</taxon>
        <taxon>Bacillales</taxon>
        <taxon>Anoxybacillaceae</taxon>
        <taxon>Geobacillus</taxon>
        <taxon>Geobacillus thermoleovorans group</taxon>
    </lineage>
</organism>
<dbReference type="EC" id="2.6.1.52" evidence="1"/>
<dbReference type="EMBL" id="BA000043">
    <property type="protein sequence ID" value="BAD74934.1"/>
    <property type="molecule type" value="Genomic_DNA"/>
</dbReference>
<dbReference type="RefSeq" id="WP_011230153.1">
    <property type="nucleotide sequence ID" value="NC_006510.1"/>
</dbReference>
<dbReference type="SMR" id="Q5L296"/>
<dbReference type="STRING" id="235909.GK0649"/>
<dbReference type="GeneID" id="32062597"/>
<dbReference type="KEGG" id="gka:GK0649"/>
<dbReference type="PATRIC" id="fig|235909.7.peg.725"/>
<dbReference type="eggNOG" id="COG1932">
    <property type="taxonomic scope" value="Bacteria"/>
</dbReference>
<dbReference type="HOGENOM" id="CLU_034866_0_2_9"/>
<dbReference type="UniPathway" id="UPA00135">
    <property type="reaction ID" value="UER00197"/>
</dbReference>
<dbReference type="Proteomes" id="UP000001172">
    <property type="component" value="Chromosome"/>
</dbReference>
<dbReference type="GO" id="GO:0005737">
    <property type="term" value="C:cytoplasm"/>
    <property type="evidence" value="ECO:0007669"/>
    <property type="project" value="UniProtKB-SubCell"/>
</dbReference>
<dbReference type="GO" id="GO:0004648">
    <property type="term" value="F:O-phospho-L-serine:2-oxoglutarate aminotransferase activity"/>
    <property type="evidence" value="ECO:0007669"/>
    <property type="project" value="UniProtKB-UniRule"/>
</dbReference>
<dbReference type="GO" id="GO:0030170">
    <property type="term" value="F:pyridoxal phosphate binding"/>
    <property type="evidence" value="ECO:0007669"/>
    <property type="project" value="UniProtKB-UniRule"/>
</dbReference>
<dbReference type="GO" id="GO:0006564">
    <property type="term" value="P:L-serine biosynthetic process"/>
    <property type="evidence" value="ECO:0007669"/>
    <property type="project" value="UniProtKB-UniRule"/>
</dbReference>
<dbReference type="CDD" id="cd00611">
    <property type="entry name" value="PSAT_like"/>
    <property type="match status" value="1"/>
</dbReference>
<dbReference type="FunFam" id="3.40.640.10:FF:000010">
    <property type="entry name" value="Phosphoserine aminotransferase"/>
    <property type="match status" value="1"/>
</dbReference>
<dbReference type="FunFam" id="3.90.1150.10:FF:000006">
    <property type="entry name" value="Phosphoserine aminotransferase"/>
    <property type="match status" value="1"/>
</dbReference>
<dbReference type="Gene3D" id="3.90.1150.10">
    <property type="entry name" value="Aspartate Aminotransferase, domain 1"/>
    <property type="match status" value="1"/>
</dbReference>
<dbReference type="Gene3D" id="3.40.640.10">
    <property type="entry name" value="Type I PLP-dependent aspartate aminotransferase-like (Major domain)"/>
    <property type="match status" value="1"/>
</dbReference>
<dbReference type="HAMAP" id="MF_00160">
    <property type="entry name" value="SerC_aminotrans_5"/>
    <property type="match status" value="1"/>
</dbReference>
<dbReference type="InterPro" id="IPR000192">
    <property type="entry name" value="Aminotrans_V_dom"/>
</dbReference>
<dbReference type="InterPro" id="IPR022278">
    <property type="entry name" value="Pser_aminoTfrase"/>
</dbReference>
<dbReference type="InterPro" id="IPR015424">
    <property type="entry name" value="PyrdxlP-dep_Trfase"/>
</dbReference>
<dbReference type="InterPro" id="IPR015421">
    <property type="entry name" value="PyrdxlP-dep_Trfase_major"/>
</dbReference>
<dbReference type="InterPro" id="IPR015422">
    <property type="entry name" value="PyrdxlP-dep_Trfase_small"/>
</dbReference>
<dbReference type="NCBIfam" id="NF003764">
    <property type="entry name" value="PRK05355.1"/>
    <property type="match status" value="1"/>
</dbReference>
<dbReference type="NCBIfam" id="TIGR01364">
    <property type="entry name" value="serC_1"/>
    <property type="match status" value="1"/>
</dbReference>
<dbReference type="PANTHER" id="PTHR43247">
    <property type="entry name" value="PHOSPHOSERINE AMINOTRANSFERASE"/>
    <property type="match status" value="1"/>
</dbReference>
<dbReference type="PANTHER" id="PTHR43247:SF1">
    <property type="entry name" value="PHOSPHOSERINE AMINOTRANSFERASE"/>
    <property type="match status" value="1"/>
</dbReference>
<dbReference type="Pfam" id="PF00266">
    <property type="entry name" value="Aminotran_5"/>
    <property type="match status" value="1"/>
</dbReference>
<dbReference type="PIRSF" id="PIRSF000525">
    <property type="entry name" value="SerC"/>
    <property type="match status" value="1"/>
</dbReference>
<dbReference type="SUPFAM" id="SSF53383">
    <property type="entry name" value="PLP-dependent transferases"/>
    <property type="match status" value="1"/>
</dbReference>
<sequence length="360" mass="39983">MKRAYNFNAGPSALPLPVLERAQKELLNFQNTGMSVMELSHRSKEYEAVHHAAKERLKRLLNVPDGYDILFLQGGASLQFSMVPMNLLTEGKIGCYVLTGAWSEKALKEAQKIGLTTVVASSKEANYTYIPPLDDVQWPKNAAYVHITSNNTIFGTQWKEFPNTPVDLVADMSSDILSRPFDVSQFALIYAGAQKNLGPSGVTVVILRNDLLERIPDGLPTMLDYRTHQKSNSLYNTPPTFAIYMLSLVLEWVEEQGGVAAMEERNQQKAAVLYEAIDESGGFYKPHAEKGSRSLMNVTFTLPNEELTKTFLAEAKERGFVGLGGHRSVGGCRASIYNAVPLEACEALASFMNEFRRRFA</sequence>